<organism>
    <name type="scientific">Streptococcus pyogenes serotype M4 (strain MGAS10750)</name>
    <dbReference type="NCBI Taxonomy" id="370554"/>
    <lineage>
        <taxon>Bacteria</taxon>
        <taxon>Bacillati</taxon>
        <taxon>Bacillota</taxon>
        <taxon>Bacilli</taxon>
        <taxon>Lactobacillales</taxon>
        <taxon>Streptococcaceae</taxon>
        <taxon>Streptococcus</taxon>
    </lineage>
</organism>
<feature type="chain" id="PRO_1000031246" description="Ribonuclease HIII">
    <location>
        <begin position="1"/>
        <end position="300"/>
    </location>
</feature>
<feature type="domain" description="RNase H type-2" evidence="2">
    <location>
        <begin position="83"/>
        <end position="300"/>
    </location>
</feature>
<feature type="binding site" evidence="1">
    <location>
        <position position="89"/>
    </location>
    <ligand>
        <name>a divalent metal cation</name>
        <dbReference type="ChEBI" id="CHEBI:60240"/>
    </ligand>
</feature>
<feature type="binding site" evidence="1">
    <location>
        <position position="90"/>
    </location>
    <ligand>
        <name>a divalent metal cation</name>
        <dbReference type="ChEBI" id="CHEBI:60240"/>
    </ligand>
</feature>
<feature type="binding site" evidence="1">
    <location>
        <position position="194"/>
    </location>
    <ligand>
        <name>a divalent metal cation</name>
        <dbReference type="ChEBI" id="CHEBI:60240"/>
    </ligand>
</feature>
<dbReference type="EC" id="3.1.26.4" evidence="1"/>
<dbReference type="EMBL" id="CP000262">
    <property type="protein sequence ID" value="ABF38573.1"/>
    <property type="molecule type" value="Genomic_DNA"/>
</dbReference>
<dbReference type="SMR" id="Q1J513"/>
<dbReference type="KEGG" id="spi:MGAS10750_Spy1623"/>
<dbReference type="HOGENOM" id="CLU_059546_1_0_9"/>
<dbReference type="Proteomes" id="UP000002434">
    <property type="component" value="Chromosome"/>
</dbReference>
<dbReference type="GO" id="GO:0005737">
    <property type="term" value="C:cytoplasm"/>
    <property type="evidence" value="ECO:0007669"/>
    <property type="project" value="UniProtKB-SubCell"/>
</dbReference>
<dbReference type="GO" id="GO:0032299">
    <property type="term" value="C:ribonuclease H2 complex"/>
    <property type="evidence" value="ECO:0007669"/>
    <property type="project" value="TreeGrafter"/>
</dbReference>
<dbReference type="GO" id="GO:0000287">
    <property type="term" value="F:magnesium ion binding"/>
    <property type="evidence" value="ECO:0007669"/>
    <property type="project" value="UniProtKB-UniRule"/>
</dbReference>
<dbReference type="GO" id="GO:0003723">
    <property type="term" value="F:RNA binding"/>
    <property type="evidence" value="ECO:0007669"/>
    <property type="project" value="InterPro"/>
</dbReference>
<dbReference type="GO" id="GO:0004523">
    <property type="term" value="F:RNA-DNA hybrid ribonuclease activity"/>
    <property type="evidence" value="ECO:0007669"/>
    <property type="project" value="UniProtKB-UniRule"/>
</dbReference>
<dbReference type="GO" id="GO:0043137">
    <property type="term" value="P:DNA replication, removal of RNA primer"/>
    <property type="evidence" value="ECO:0007669"/>
    <property type="project" value="TreeGrafter"/>
</dbReference>
<dbReference type="GO" id="GO:0006298">
    <property type="term" value="P:mismatch repair"/>
    <property type="evidence" value="ECO:0007669"/>
    <property type="project" value="TreeGrafter"/>
</dbReference>
<dbReference type="CDD" id="cd06590">
    <property type="entry name" value="RNase_HII_bacteria_HIII_like"/>
    <property type="match status" value="1"/>
</dbReference>
<dbReference type="CDD" id="cd14796">
    <property type="entry name" value="RNAse_HIII_N"/>
    <property type="match status" value="1"/>
</dbReference>
<dbReference type="FunFam" id="3.30.420.10:FF:000047">
    <property type="entry name" value="Ribonuclease HIII"/>
    <property type="match status" value="1"/>
</dbReference>
<dbReference type="Gene3D" id="3.30.420.10">
    <property type="entry name" value="Ribonuclease H-like superfamily/Ribonuclease H"/>
    <property type="match status" value="1"/>
</dbReference>
<dbReference type="Gene3D" id="3.30.310.10">
    <property type="entry name" value="TATA-Binding Protein"/>
    <property type="match status" value="1"/>
</dbReference>
<dbReference type="HAMAP" id="MF_00053">
    <property type="entry name" value="RNase_HIII"/>
    <property type="match status" value="1"/>
</dbReference>
<dbReference type="InterPro" id="IPR001352">
    <property type="entry name" value="RNase_HII/HIII"/>
</dbReference>
<dbReference type="InterPro" id="IPR024567">
    <property type="entry name" value="RNase_HII/HIII_dom"/>
</dbReference>
<dbReference type="InterPro" id="IPR004641">
    <property type="entry name" value="RNase_HIII"/>
</dbReference>
<dbReference type="InterPro" id="IPR024568">
    <property type="entry name" value="RNase_HIII_N"/>
</dbReference>
<dbReference type="InterPro" id="IPR012337">
    <property type="entry name" value="RNaseH-like_sf"/>
</dbReference>
<dbReference type="InterPro" id="IPR036397">
    <property type="entry name" value="RNaseH_sf"/>
</dbReference>
<dbReference type="InterPro" id="IPR012295">
    <property type="entry name" value="TBP_dom_sf"/>
</dbReference>
<dbReference type="NCBIfam" id="TIGR00716">
    <property type="entry name" value="rnhC"/>
    <property type="match status" value="1"/>
</dbReference>
<dbReference type="PANTHER" id="PTHR10954:SF23">
    <property type="entry name" value="RIBONUCLEASE"/>
    <property type="match status" value="1"/>
</dbReference>
<dbReference type="PANTHER" id="PTHR10954">
    <property type="entry name" value="RIBONUCLEASE H2 SUBUNIT A"/>
    <property type="match status" value="1"/>
</dbReference>
<dbReference type="Pfam" id="PF11858">
    <property type="entry name" value="DUF3378"/>
    <property type="match status" value="1"/>
</dbReference>
<dbReference type="Pfam" id="PF01351">
    <property type="entry name" value="RNase_HII"/>
    <property type="match status" value="1"/>
</dbReference>
<dbReference type="PIRSF" id="PIRSF037748">
    <property type="entry name" value="RnhC"/>
    <property type="match status" value="1"/>
</dbReference>
<dbReference type="SUPFAM" id="SSF53098">
    <property type="entry name" value="Ribonuclease H-like"/>
    <property type="match status" value="1"/>
</dbReference>
<dbReference type="PROSITE" id="PS51975">
    <property type="entry name" value="RNASE_H_2"/>
    <property type="match status" value="1"/>
</dbReference>
<reference key="1">
    <citation type="journal article" date="2006" name="Proc. Natl. Acad. Sci. U.S.A.">
        <title>Molecular genetic anatomy of inter- and intraserotype variation in the human bacterial pathogen group A Streptococcus.</title>
        <authorList>
            <person name="Beres S.B."/>
            <person name="Richter E.W."/>
            <person name="Nagiec M.J."/>
            <person name="Sumby P."/>
            <person name="Porcella S.F."/>
            <person name="DeLeo F.R."/>
            <person name="Musser J.M."/>
        </authorList>
    </citation>
    <scope>NUCLEOTIDE SEQUENCE [LARGE SCALE GENOMIC DNA]</scope>
    <source>
        <strain>MGAS10750</strain>
    </source>
</reference>
<comment type="function">
    <text evidence="1">Endonuclease that specifically degrades the RNA of RNA-DNA hybrids.</text>
</comment>
<comment type="catalytic activity">
    <reaction evidence="1">
        <text>Endonucleolytic cleavage to 5'-phosphomonoester.</text>
        <dbReference type="EC" id="3.1.26.4"/>
    </reaction>
</comment>
<comment type="cofactor">
    <cofactor evidence="1">
        <name>Mn(2+)</name>
        <dbReference type="ChEBI" id="CHEBI:29035"/>
    </cofactor>
    <cofactor evidence="1">
        <name>Mg(2+)</name>
        <dbReference type="ChEBI" id="CHEBI:18420"/>
    </cofactor>
    <text evidence="1">Manganese or magnesium. Binds 1 divalent metal ion per monomer in the absence of substrate. May bind a second metal ion after substrate binding.</text>
</comment>
<comment type="subcellular location">
    <subcellularLocation>
        <location evidence="1">Cytoplasm</location>
    </subcellularLocation>
</comment>
<comment type="similarity">
    <text evidence="1">Belongs to the RNase HII family. RnhC subfamily.</text>
</comment>
<keyword id="KW-0963">Cytoplasm</keyword>
<keyword id="KW-0255">Endonuclease</keyword>
<keyword id="KW-0378">Hydrolase</keyword>
<keyword id="KW-0460">Magnesium</keyword>
<keyword id="KW-0479">Metal-binding</keyword>
<keyword id="KW-0540">Nuclease</keyword>
<evidence type="ECO:0000255" key="1">
    <source>
        <dbReference type="HAMAP-Rule" id="MF_00053"/>
    </source>
</evidence>
<evidence type="ECO:0000255" key="2">
    <source>
        <dbReference type="PROSITE-ProRule" id="PRU01319"/>
    </source>
</evidence>
<sequence>MNTLVLKIDAILSKHLKKQLAPYTINSQNTYVAFAAKKNGVTVLLYKSGKLVLQGNGANALAQELNLPVAKTVFEASNNSQDIPIIGSDEVGNGSYFGGIAVVASFVDPKDHSFLKKLGVDDSKKLSDKTIQQIAPLLEKQIPHQSLLLSPKKYNELVGKSKPYNAISIKVALHNQAIFLLLQKGIQPKQIVIDAFTSQSNYEKHLKKEKSHFPNPLTFQEKAESHYLAVAVSSIIARNLFLDNLDQLGQDLGYQLPSGAGSASDKVASQLLAAYGMSSLEYSAKLHFANTHKAQALLTK</sequence>
<accession>Q1J513</accession>
<name>RNH3_STRPF</name>
<gene>
    <name evidence="1" type="primary">rnhC</name>
    <name type="ordered locus">MGAS10750_Spy1623</name>
</gene>
<protein>
    <recommendedName>
        <fullName evidence="1">Ribonuclease HIII</fullName>
        <shortName evidence="1">RNase HIII</shortName>
        <ecNumber evidence="1">3.1.26.4</ecNumber>
    </recommendedName>
</protein>
<proteinExistence type="inferred from homology"/>